<sequence>MNGIRDVVREEQPRERLLLEGAGSLSNRELLAVLLRTGSKEETVLKLSDKILHQFDGLRMLKDATLEELISIHGIGISKASQLMAAFELGRRMVRLEYQNRYSIRSPEDCAKYMMEEMRFLQQEHFVCLYLNTKNQVLHRQTIFIGSLNTSIVHPREVFKEAFRRAAASIICLHNHPSGDPTPSREDIEVTKRLVECGQIIGIEVLDHIIIGDHKFVSLKEKGHI</sequence>
<reference key="1">
    <citation type="submission" date="2008-10" db="EMBL/GenBank/DDBJ databases">
        <title>Genome sequence of Bacillus cereus G9842.</title>
        <authorList>
            <person name="Dodson R.J."/>
            <person name="Durkin A.S."/>
            <person name="Rosovitz M.J."/>
            <person name="Rasko D.A."/>
            <person name="Hoffmaster A."/>
            <person name="Ravel J."/>
            <person name="Sutton G."/>
        </authorList>
    </citation>
    <scope>NUCLEOTIDE SEQUENCE [LARGE SCALE GENOMIC DNA]</scope>
    <source>
        <strain>G9842</strain>
    </source>
</reference>
<proteinExistence type="inferred from homology"/>
<organism>
    <name type="scientific">Bacillus cereus (strain G9842)</name>
    <dbReference type="NCBI Taxonomy" id="405531"/>
    <lineage>
        <taxon>Bacteria</taxon>
        <taxon>Bacillati</taxon>
        <taxon>Bacillota</taxon>
        <taxon>Bacilli</taxon>
        <taxon>Bacillales</taxon>
        <taxon>Bacillaceae</taxon>
        <taxon>Bacillus</taxon>
        <taxon>Bacillus cereus group</taxon>
    </lineage>
</organism>
<feature type="chain" id="PRO_1000195285" description="UPF0758 protein BCG9842_B0662">
    <location>
        <begin position="1"/>
        <end position="225"/>
    </location>
</feature>
<feature type="domain" description="MPN" evidence="1">
    <location>
        <begin position="103"/>
        <end position="225"/>
    </location>
</feature>
<feature type="short sequence motif" description="JAMM motif" evidence="1">
    <location>
        <begin position="174"/>
        <end position="187"/>
    </location>
</feature>
<feature type="binding site" evidence="1">
    <location>
        <position position="174"/>
    </location>
    <ligand>
        <name>Zn(2+)</name>
        <dbReference type="ChEBI" id="CHEBI:29105"/>
        <note>catalytic</note>
    </ligand>
</feature>
<feature type="binding site" evidence="1">
    <location>
        <position position="176"/>
    </location>
    <ligand>
        <name>Zn(2+)</name>
        <dbReference type="ChEBI" id="CHEBI:29105"/>
        <note>catalytic</note>
    </ligand>
</feature>
<feature type="binding site" evidence="1">
    <location>
        <position position="187"/>
    </location>
    <ligand>
        <name>Zn(2+)</name>
        <dbReference type="ChEBI" id="CHEBI:29105"/>
        <note>catalytic</note>
    </ligand>
</feature>
<gene>
    <name type="ordered locus">BCG9842_B0662</name>
</gene>
<name>Y662_BACC2</name>
<dbReference type="EMBL" id="CP001186">
    <property type="protein sequence ID" value="ACK95298.1"/>
    <property type="molecule type" value="Genomic_DNA"/>
</dbReference>
<dbReference type="SMR" id="B7IIW5"/>
<dbReference type="KEGG" id="bcg:BCG9842_B0662"/>
<dbReference type="HOGENOM" id="CLU_073529_0_2_9"/>
<dbReference type="Proteomes" id="UP000006744">
    <property type="component" value="Chromosome"/>
</dbReference>
<dbReference type="GO" id="GO:0046872">
    <property type="term" value="F:metal ion binding"/>
    <property type="evidence" value="ECO:0007669"/>
    <property type="project" value="UniProtKB-KW"/>
</dbReference>
<dbReference type="GO" id="GO:0008237">
    <property type="term" value="F:metallopeptidase activity"/>
    <property type="evidence" value="ECO:0007669"/>
    <property type="project" value="UniProtKB-KW"/>
</dbReference>
<dbReference type="GO" id="GO:0006508">
    <property type="term" value="P:proteolysis"/>
    <property type="evidence" value="ECO:0007669"/>
    <property type="project" value="UniProtKB-KW"/>
</dbReference>
<dbReference type="CDD" id="cd08071">
    <property type="entry name" value="MPN_DUF2466"/>
    <property type="match status" value="1"/>
</dbReference>
<dbReference type="Gene3D" id="3.40.140.10">
    <property type="entry name" value="Cytidine Deaminase, domain 2"/>
    <property type="match status" value="1"/>
</dbReference>
<dbReference type="InterPro" id="IPR037518">
    <property type="entry name" value="MPN"/>
</dbReference>
<dbReference type="InterPro" id="IPR025657">
    <property type="entry name" value="RadC_JAB"/>
</dbReference>
<dbReference type="InterPro" id="IPR010994">
    <property type="entry name" value="RuvA_2-like"/>
</dbReference>
<dbReference type="InterPro" id="IPR001405">
    <property type="entry name" value="UPF0758"/>
</dbReference>
<dbReference type="InterPro" id="IPR020891">
    <property type="entry name" value="UPF0758_CS"/>
</dbReference>
<dbReference type="InterPro" id="IPR046778">
    <property type="entry name" value="UPF0758_N"/>
</dbReference>
<dbReference type="NCBIfam" id="NF000642">
    <property type="entry name" value="PRK00024.1"/>
    <property type="match status" value="1"/>
</dbReference>
<dbReference type="NCBIfam" id="TIGR00608">
    <property type="entry name" value="radc"/>
    <property type="match status" value="1"/>
</dbReference>
<dbReference type="PANTHER" id="PTHR30471">
    <property type="entry name" value="DNA REPAIR PROTEIN RADC"/>
    <property type="match status" value="1"/>
</dbReference>
<dbReference type="PANTHER" id="PTHR30471:SF3">
    <property type="entry name" value="UPF0758 PROTEIN YEES-RELATED"/>
    <property type="match status" value="1"/>
</dbReference>
<dbReference type="Pfam" id="PF04002">
    <property type="entry name" value="RadC"/>
    <property type="match status" value="1"/>
</dbReference>
<dbReference type="Pfam" id="PF20582">
    <property type="entry name" value="UPF0758_N"/>
    <property type="match status" value="1"/>
</dbReference>
<dbReference type="SUPFAM" id="SSF102712">
    <property type="entry name" value="JAB1/MPN domain"/>
    <property type="match status" value="1"/>
</dbReference>
<dbReference type="SUPFAM" id="SSF47781">
    <property type="entry name" value="RuvA domain 2-like"/>
    <property type="match status" value="1"/>
</dbReference>
<dbReference type="PROSITE" id="PS50249">
    <property type="entry name" value="MPN"/>
    <property type="match status" value="1"/>
</dbReference>
<dbReference type="PROSITE" id="PS01302">
    <property type="entry name" value="UPF0758"/>
    <property type="match status" value="1"/>
</dbReference>
<accession>B7IIW5</accession>
<keyword id="KW-0378">Hydrolase</keyword>
<keyword id="KW-0479">Metal-binding</keyword>
<keyword id="KW-0482">Metalloprotease</keyword>
<keyword id="KW-0645">Protease</keyword>
<keyword id="KW-0862">Zinc</keyword>
<comment type="similarity">
    <text evidence="2">Belongs to the UPF0758 family.</text>
</comment>
<evidence type="ECO:0000255" key="1">
    <source>
        <dbReference type="PROSITE-ProRule" id="PRU01182"/>
    </source>
</evidence>
<evidence type="ECO:0000305" key="2"/>
<protein>
    <recommendedName>
        <fullName>UPF0758 protein BCG9842_B0662</fullName>
    </recommendedName>
</protein>